<organism>
    <name type="scientific">Escherichia coli O7:K1 (strain IAI39 / ExPEC)</name>
    <dbReference type="NCBI Taxonomy" id="585057"/>
    <lineage>
        <taxon>Bacteria</taxon>
        <taxon>Pseudomonadati</taxon>
        <taxon>Pseudomonadota</taxon>
        <taxon>Gammaproteobacteria</taxon>
        <taxon>Enterobacterales</taxon>
        <taxon>Enterobacteriaceae</taxon>
        <taxon>Escherichia</taxon>
    </lineage>
</organism>
<comment type="function">
    <text evidence="1">Probably mediates the hydrolysis of some nucleoside diphosphate derivatives.</text>
</comment>
<comment type="cofactor">
    <cofactor evidence="1">
        <name>Mn(2+)</name>
        <dbReference type="ChEBI" id="CHEBI:29035"/>
    </cofactor>
    <cofactor evidence="1">
        <name>Mg(2+)</name>
        <dbReference type="ChEBI" id="CHEBI:18420"/>
    </cofactor>
</comment>
<comment type="similarity">
    <text evidence="1">Belongs to the Nudix hydrolase family. PCD1 subfamily.</text>
</comment>
<dbReference type="EC" id="3.6.1.-" evidence="1"/>
<dbReference type="EMBL" id="CU928164">
    <property type="protein sequence ID" value="CAR17373.1"/>
    <property type="molecule type" value="Genomic_DNA"/>
</dbReference>
<dbReference type="RefSeq" id="WP_000456735.1">
    <property type="nucleotide sequence ID" value="NC_011750.1"/>
</dbReference>
<dbReference type="RefSeq" id="YP_002407247.1">
    <property type="nucleotide sequence ID" value="NC_011750.1"/>
</dbReference>
<dbReference type="SMR" id="B7NSW2"/>
<dbReference type="STRING" id="585057.ECIAI39_1239"/>
<dbReference type="KEGG" id="ect:ECIAI39_1239"/>
<dbReference type="PATRIC" id="fig|585057.6.peg.1297"/>
<dbReference type="HOGENOM" id="CLU_040940_5_2_6"/>
<dbReference type="Proteomes" id="UP000000749">
    <property type="component" value="Chromosome"/>
</dbReference>
<dbReference type="GO" id="GO:0010945">
    <property type="term" value="F:coenzyme A diphosphatase activity"/>
    <property type="evidence" value="ECO:0007669"/>
    <property type="project" value="InterPro"/>
</dbReference>
<dbReference type="GO" id="GO:0000287">
    <property type="term" value="F:magnesium ion binding"/>
    <property type="evidence" value="ECO:0007669"/>
    <property type="project" value="UniProtKB-UniRule"/>
</dbReference>
<dbReference type="GO" id="GO:0030145">
    <property type="term" value="F:manganese ion binding"/>
    <property type="evidence" value="ECO:0007669"/>
    <property type="project" value="UniProtKB-UniRule"/>
</dbReference>
<dbReference type="GO" id="GO:0009132">
    <property type="term" value="P:nucleoside diphosphate metabolic process"/>
    <property type="evidence" value="ECO:0007669"/>
    <property type="project" value="InterPro"/>
</dbReference>
<dbReference type="CDD" id="cd03426">
    <property type="entry name" value="NUDIX_CoAse_Nudt7"/>
    <property type="match status" value="1"/>
</dbReference>
<dbReference type="FunFam" id="3.90.79.10:FF:000013">
    <property type="entry name" value="Uncharacterized Nudix hydrolase NudL"/>
    <property type="match status" value="1"/>
</dbReference>
<dbReference type="Gene3D" id="3.90.79.10">
    <property type="entry name" value="Nucleoside Triphosphate Pyrophosphohydrolase"/>
    <property type="match status" value="1"/>
</dbReference>
<dbReference type="HAMAP" id="MF_01592">
    <property type="entry name" value="Nudix_NudL"/>
    <property type="match status" value="1"/>
</dbReference>
<dbReference type="InterPro" id="IPR045121">
    <property type="entry name" value="CoAse"/>
</dbReference>
<dbReference type="InterPro" id="IPR015797">
    <property type="entry name" value="NUDIX_hydrolase-like_dom_sf"/>
</dbReference>
<dbReference type="InterPro" id="IPR000086">
    <property type="entry name" value="NUDIX_hydrolase_dom"/>
</dbReference>
<dbReference type="InterPro" id="IPR000059">
    <property type="entry name" value="NUDIX_hydrolase_NudL_CS"/>
</dbReference>
<dbReference type="InterPro" id="IPR023735">
    <property type="entry name" value="Nudix_NudL"/>
</dbReference>
<dbReference type="NCBIfam" id="NF007980">
    <property type="entry name" value="PRK10707.1"/>
    <property type="match status" value="1"/>
</dbReference>
<dbReference type="PANTHER" id="PTHR12992:SF11">
    <property type="entry name" value="MITOCHONDRIAL COENZYME A DIPHOSPHATASE NUDT8"/>
    <property type="match status" value="1"/>
</dbReference>
<dbReference type="PANTHER" id="PTHR12992">
    <property type="entry name" value="NUDIX HYDROLASE"/>
    <property type="match status" value="1"/>
</dbReference>
<dbReference type="Pfam" id="PF00293">
    <property type="entry name" value="NUDIX"/>
    <property type="match status" value="1"/>
</dbReference>
<dbReference type="SUPFAM" id="SSF55811">
    <property type="entry name" value="Nudix"/>
    <property type="match status" value="1"/>
</dbReference>
<dbReference type="PROSITE" id="PS51462">
    <property type="entry name" value="NUDIX"/>
    <property type="match status" value="1"/>
</dbReference>
<dbReference type="PROSITE" id="PS01293">
    <property type="entry name" value="NUDIX_COA"/>
    <property type="match status" value="1"/>
</dbReference>
<feature type="chain" id="PRO_1000147814" description="Uncharacterized Nudix hydrolase NudL">
    <location>
        <begin position="1"/>
        <end position="192"/>
    </location>
</feature>
<feature type="domain" description="Nudix hydrolase" evidence="1">
    <location>
        <begin position="29"/>
        <end position="160"/>
    </location>
</feature>
<feature type="short sequence motif" description="Nudix box">
    <location>
        <begin position="67"/>
        <end position="89"/>
    </location>
</feature>
<feature type="binding site" evidence="1">
    <location>
        <position position="83"/>
    </location>
    <ligand>
        <name>Mg(2+)</name>
        <dbReference type="ChEBI" id="CHEBI:18420"/>
    </ligand>
</feature>
<feature type="binding site" evidence="1">
    <location>
        <position position="87"/>
    </location>
    <ligand>
        <name>Mg(2+)</name>
        <dbReference type="ChEBI" id="CHEBI:18420"/>
    </ligand>
</feature>
<sequence>MEYRSLTLDDFLSRFQLLRPQINRETLNHRQAAVLIPIVRRPQPGLLLTQRSIHLRKHAGQVAFPGGAVDDTDTSVIAAALREAEEEVAIPPSAVEVIGVLPPVDSVTGYQVTPVVGIIPPDLPYSASEDEVSAVFEMPLAQALHLGRYHPLDIYRRGDSHRVWLSWYEQYFVWGMTAGIIRELALQIGVKP</sequence>
<evidence type="ECO:0000255" key="1">
    <source>
        <dbReference type="HAMAP-Rule" id="MF_01592"/>
    </source>
</evidence>
<proteinExistence type="inferred from homology"/>
<gene>
    <name evidence="1" type="primary">nudL</name>
    <name type="ordered locus">ECIAI39_1239</name>
</gene>
<accession>B7NSW2</accession>
<reference key="1">
    <citation type="journal article" date="2009" name="PLoS Genet.">
        <title>Organised genome dynamics in the Escherichia coli species results in highly diverse adaptive paths.</title>
        <authorList>
            <person name="Touchon M."/>
            <person name="Hoede C."/>
            <person name="Tenaillon O."/>
            <person name="Barbe V."/>
            <person name="Baeriswyl S."/>
            <person name="Bidet P."/>
            <person name="Bingen E."/>
            <person name="Bonacorsi S."/>
            <person name="Bouchier C."/>
            <person name="Bouvet O."/>
            <person name="Calteau A."/>
            <person name="Chiapello H."/>
            <person name="Clermont O."/>
            <person name="Cruveiller S."/>
            <person name="Danchin A."/>
            <person name="Diard M."/>
            <person name="Dossat C."/>
            <person name="Karoui M.E."/>
            <person name="Frapy E."/>
            <person name="Garry L."/>
            <person name="Ghigo J.M."/>
            <person name="Gilles A.M."/>
            <person name="Johnson J."/>
            <person name="Le Bouguenec C."/>
            <person name="Lescat M."/>
            <person name="Mangenot S."/>
            <person name="Martinez-Jehanne V."/>
            <person name="Matic I."/>
            <person name="Nassif X."/>
            <person name="Oztas S."/>
            <person name="Petit M.A."/>
            <person name="Pichon C."/>
            <person name="Rouy Z."/>
            <person name="Ruf C.S."/>
            <person name="Schneider D."/>
            <person name="Tourret J."/>
            <person name="Vacherie B."/>
            <person name="Vallenet D."/>
            <person name="Medigue C."/>
            <person name="Rocha E.P.C."/>
            <person name="Denamur E."/>
        </authorList>
    </citation>
    <scope>NUCLEOTIDE SEQUENCE [LARGE SCALE GENOMIC DNA]</scope>
    <source>
        <strain>IAI39 / ExPEC</strain>
    </source>
</reference>
<protein>
    <recommendedName>
        <fullName evidence="1">Uncharacterized Nudix hydrolase NudL</fullName>
        <ecNumber evidence="1">3.6.1.-</ecNumber>
    </recommendedName>
</protein>
<keyword id="KW-0378">Hydrolase</keyword>
<keyword id="KW-0460">Magnesium</keyword>
<keyword id="KW-0464">Manganese</keyword>
<keyword id="KW-0479">Metal-binding</keyword>
<name>NUDL_ECO7I</name>